<proteinExistence type="evidence at protein level"/>
<protein>
    <recommendedName>
        <fullName>Iroquois-class homeodomain protein IRX-1</fullName>
    </recommendedName>
    <alternativeName>
        <fullName>Homeodomain protein IRXA1</fullName>
    </alternativeName>
    <alternativeName>
        <fullName>Iroquois homeobox protein 1</fullName>
    </alternativeName>
</protein>
<gene>
    <name type="primary">IRX1</name>
    <name type="synonym">IRXA1</name>
</gene>
<dbReference type="EMBL" id="AY335938">
    <property type="protein sequence ID" value="AAQ16544.1"/>
    <property type="molecule type" value="mRNA"/>
</dbReference>
<dbReference type="EMBL" id="AY335947">
    <property type="protein sequence ID" value="AAQ16553.1"/>
    <property type="molecule type" value="Genomic_DNA"/>
</dbReference>
<dbReference type="EMBL" id="BC029160">
    <property type="protein sequence ID" value="AAH29160.1"/>
    <property type="molecule type" value="mRNA"/>
</dbReference>
<dbReference type="EMBL" id="U90307">
    <property type="protein sequence ID" value="AAB50005.1"/>
    <property type="molecule type" value="mRNA"/>
</dbReference>
<dbReference type="CCDS" id="CCDS34132.1"/>
<dbReference type="RefSeq" id="NP_077313.3">
    <property type="nucleotide sequence ID" value="NM_024337.3"/>
</dbReference>
<dbReference type="SMR" id="P78414"/>
<dbReference type="BioGRID" id="122604">
    <property type="interactions" value="9"/>
</dbReference>
<dbReference type="FunCoup" id="P78414">
    <property type="interactions" value="423"/>
</dbReference>
<dbReference type="IntAct" id="P78414">
    <property type="interactions" value="1"/>
</dbReference>
<dbReference type="STRING" id="9606.ENSP00000305244"/>
<dbReference type="iPTMnet" id="P78414"/>
<dbReference type="PhosphoSitePlus" id="P78414"/>
<dbReference type="BioMuta" id="IRX1"/>
<dbReference type="DMDM" id="47117873"/>
<dbReference type="jPOST" id="P78414"/>
<dbReference type="MassIVE" id="P78414"/>
<dbReference type="PaxDb" id="9606-ENSP00000305244"/>
<dbReference type="PeptideAtlas" id="P78414"/>
<dbReference type="ProteomicsDB" id="57619"/>
<dbReference type="Antibodypedia" id="9131">
    <property type="antibodies" value="169 antibodies from 31 providers"/>
</dbReference>
<dbReference type="DNASU" id="79192"/>
<dbReference type="Ensembl" id="ENST00000302006.4">
    <property type="protein sequence ID" value="ENSP00000305244.3"/>
    <property type="gene ID" value="ENSG00000170549.4"/>
</dbReference>
<dbReference type="GeneID" id="79192"/>
<dbReference type="KEGG" id="hsa:79192"/>
<dbReference type="MANE-Select" id="ENST00000302006.4">
    <property type="protein sequence ID" value="ENSP00000305244.3"/>
    <property type="RefSeq nucleotide sequence ID" value="NM_024337.4"/>
    <property type="RefSeq protein sequence ID" value="NP_077313.3"/>
</dbReference>
<dbReference type="UCSC" id="uc003jde.3">
    <property type="organism name" value="human"/>
</dbReference>
<dbReference type="AGR" id="HGNC:14358"/>
<dbReference type="CTD" id="79192"/>
<dbReference type="DisGeNET" id="79192"/>
<dbReference type="GeneCards" id="IRX1"/>
<dbReference type="HGNC" id="HGNC:14358">
    <property type="gene designation" value="IRX1"/>
</dbReference>
<dbReference type="HPA" id="ENSG00000170549">
    <property type="expression patterns" value="Tissue enhanced (breast, kidney, salivary gland)"/>
</dbReference>
<dbReference type="MIM" id="606197">
    <property type="type" value="gene"/>
</dbReference>
<dbReference type="neXtProt" id="NX_P78414"/>
<dbReference type="OpenTargets" id="ENSG00000170549"/>
<dbReference type="PharmGKB" id="PA29924"/>
<dbReference type="VEuPathDB" id="HostDB:ENSG00000170549"/>
<dbReference type="eggNOG" id="KOG0773">
    <property type="taxonomic scope" value="Eukaryota"/>
</dbReference>
<dbReference type="GeneTree" id="ENSGT00940000160429"/>
<dbReference type="HOGENOM" id="CLU_042927_0_0_1"/>
<dbReference type="InParanoid" id="P78414"/>
<dbReference type="OMA" id="QVNHTST"/>
<dbReference type="OrthoDB" id="5399138at2759"/>
<dbReference type="PAN-GO" id="P78414">
    <property type="GO annotations" value="6 GO annotations based on evolutionary models"/>
</dbReference>
<dbReference type="PhylomeDB" id="P78414"/>
<dbReference type="TreeFam" id="TF319371"/>
<dbReference type="PathwayCommons" id="P78414"/>
<dbReference type="Reactome" id="R-HSA-9831926">
    <property type="pathway name" value="Nephron development"/>
</dbReference>
<dbReference type="SignaLink" id="P78414"/>
<dbReference type="SIGNOR" id="P78414"/>
<dbReference type="BioGRID-ORCS" id="79192">
    <property type="hits" value="14 hits in 1168 CRISPR screens"/>
</dbReference>
<dbReference type="GeneWiki" id="IRX1"/>
<dbReference type="GenomeRNAi" id="79192"/>
<dbReference type="Pharos" id="P78414">
    <property type="development level" value="Tbio"/>
</dbReference>
<dbReference type="PRO" id="PR:P78414"/>
<dbReference type="Proteomes" id="UP000005640">
    <property type="component" value="Chromosome 5"/>
</dbReference>
<dbReference type="RNAct" id="P78414">
    <property type="molecule type" value="protein"/>
</dbReference>
<dbReference type="Bgee" id="ENSG00000170549">
    <property type="expression patterns" value="Expressed in parotid gland and 96 other cell types or tissues"/>
</dbReference>
<dbReference type="GO" id="GO:0000785">
    <property type="term" value="C:chromatin"/>
    <property type="evidence" value="ECO:0000247"/>
    <property type="project" value="NTNU_SB"/>
</dbReference>
<dbReference type="GO" id="GO:0005634">
    <property type="term" value="C:nucleus"/>
    <property type="evidence" value="ECO:0000318"/>
    <property type="project" value="GO_Central"/>
</dbReference>
<dbReference type="GO" id="GO:0000981">
    <property type="term" value="F:DNA-binding transcription factor activity, RNA polymerase II-specific"/>
    <property type="evidence" value="ECO:0000247"/>
    <property type="project" value="NTNU_SB"/>
</dbReference>
<dbReference type="GO" id="GO:0001227">
    <property type="term" value="F:DNA-binding transcription repressor activity, RNA polymerase II-specific"/>
    <property type="evidence" value="ECO:0000314"/>
    <property type="project" value="NTNU_SB"/>
</dbReference>
<dbReference type="GO" id="GO:0000978">
    <property type="term" value="F:RNA polymerase II cis-regulatory region sequence-specific DNA binding"/>
    <property type="evidence" value="ECO:0000318"/>
    <property type="project" value="GO_Central"/>
</dbReference>
<dbReference type="GO" id="GO:0043565">
    <property type="term" value="F:sequence-specific DNA binding"/>
    <property type="evidence" value="ECO:0000314"/>
    <property type="project" value="NTNU_SB"/>
</dbReference>
<dbReference type="GO" id="GO:1990837">
    <property type="term" value="F:sequence-specific double-stranded DNA binding"/>
    <property type="evidence" value="ECO:0000314"/>
    <property type="project" value="ARUK-UCL"/>
</dbReference>
<dbReference type="GO" id="GO:0048468">
    <property type="term" value="P:cell development"/>
    <property type="evidence" value="ECO:0000318"/>
    <property type="project" value="GO_Central"/>
</dbReference>
<dbReference type="GO" id="GO:0000122">
    <property type="term" value="P:negative regulation of transcription by RNA polymerase II"/>
    <property type="evidence" value="ECO:0000314"/>
    <property type="project" value="NTNU_SB"/>
</dbReference>
<dbReference type="GO" id="GO:0030182">
    <property type="term" value="P:neuron differentiation"/>
    <property type="evidence" value="ECO:0000318"/>
    <property type="project" value="GO_Central"/>
</dbReference>
<dbReference type="GO" id="GO:0010628">
    <property type="term" value="P:positive regulation of gene expression"/>
    <property type="evidence" value="ECO:0007669"/>
    <property type="project" value="Ensembl"/>
</dbReference>
<dbReference type="GO" id="GO:0072272">
    <property type="term" value="P:proximal/distal pattern formation involved in metanephric nephron development"/>
    <property type="evidence" value="ECO:0007669"/>
    <property type="project" value="Ensembl"/>
</dbReference>
<dbReference type="GO" id="GO:0006357">
    <property type="term" value="P:regulation of transcription by RNA polymerase II"/>
    <property type="evidence" value="ECO:0000318"/>
    <property type="project" value="GO_Central"/>
</dbReference>
<dbReference type="GO" id="GO:0072086">
    <property type="term" value="P:specification of loop of Henle identity"/>
    <property type="evidence" value="ECO:0007669"/>
    <property type="project" value="Ensembl"/>
</dbReference>
<dbReference type="CDD" id="cd00086">
    <property type="entry name" value="homeodomain"/>
    <property type="match status" value="1"/>
</dbReference>
<dbReference type="FunFam" id="1.10.10.60:FF:000003">
    <property type="entry name" value="Iroquois-class homeobox protein IRX"/>
    <property type="match status" value="1"/>
</dbReference>
<dbReference type="Gene3D" id="1.10.10.60">
    <property type="entry name" value="Homeodomain-like"/>
    <property type="match status" value="1"/>
</dbReference>
<dbReference type="InterPro" id="IPR001356">
    <property type="entry name" value="HD"/>
</dbReference>
<dbReference type="InterPro" id="IPR017970">
    <property type="entry name" value="Homeobox_CS"/>
</dbReference>
<dbReference type="InterPro" id="IPR009057">
    <property type="entry name" value="Homeodomain-like_sf"/>
</dbReference>
<dbReference type="InterPro" id="IPR003893">
    <property type="entry name" value="Iroquois_homeo"/>
</dbReference>
<dbReference type="InterPro" id="IPR008422">
    <property type="entry name" value="KN_HD"/>
</dbReference>
<dbReference type="PANTHER" id="PTHR11211">
    <property type="entry name" value="IROQUOIS-CLASS HOMEODOMAIN PROTEIN IRX"/>
    <property type="match status" value="1"/>
</dbReference>
<dbReference type="PANTHER" id="PTHR11211:SF13">
    <property type="entry name" value="IROQUOIS-CLASS HOMEODOMAIN PROTEIN IRX-1"/>
    <property type="match status" value="1"/>
</dbReference>
<dbReference type="Pfam" id="PF05920">
    <property type="entry name" value="Homeobox_KN"/>
    <property type="match status" value="1"/>
</dbReference>
<dbReference type="SMART" id="SM00389">
    <property type="entry name" value="HOX"/>
    <property type="match status" value="1"/>
</dbReference>
<dbReference type="SMART" id="SM00548">
    <property type="entry name" value="IRO"/>
    <property type="match status" value="1"/>
</dbReference>
<dbReference type="SUPFAM" id="SSF46689">
    <property type="entry name" value="Homeodomain-like"/>
    <property type="match status" value="1"/>
</dbReference>
<dbReference type="PROSITE" id="PS00027">
    <property type="entry name" value="HOMEOBOX_1"/>
    <property type="match status" value="1"/>
</dbReference>
<dbReference type="PROSITE" id="PS50071">
    <property type="entry name" value="HOMEOBOX_2"/>
    <property type="match status" value="1"/>
</dbReference>
<organism>
    <name type="scientific">Homo sapiens</name>
    <name type="common">Human</name>
    <dbReference type="NCBI Taxonomy" id="9606"/>
    <lineage>
        <taxon>Eukaryota</taxon>
        <taxon>Metazoa</taxon>
        <taxon>Chordata</taxon>
        <taxon>Craniata</taxon>
        <taxon>Vertebrata</taxon>
        <taxon>Euteleostomi</taxon>
        <taxon>Mammalia</taxon>
        <taxon>Eutheria</taxon>
        <taxon>Euarchontoglires</taxon>
        <taxon>Primates</taxon>
        <taxon>Haplorrhini</taxon>
        <taxon>Catarrhini</taxon>
        <taxon>Hominidae</taxon>
        <taxon>Homo</taxon>
    </lineage>
</organism>
<reference key="1">
    <citation type="submission" date="2003-07" db="EMBL/GenBank/DDBJ databases">
        <title>Characterization of the human homeobox two-cluster Iroquois gene family.</title>
        <authorList>
            <person name="Hansen L."/>
            <person name="Wu Q."/>
            <person name="Tommerup N."/>
        </authorList>
    </citation>
    <scope>NUCLEOTIDE SEQUENCE [GENOMIC DNA / MRNA]</scope>
</reference>
<reference key="2">
    <citation type="journal article" date="2004" name="Genome Res.">
        <title>The status, quality, and expansion of the NIH full-length cDNA project: the Mammalian Gene Collection (MGC).</title>
        <authorList>
            <consortium name="The MGC Project Team"/>
        </authorList>
    </citation>
    <scope>NUCLEOTIDE SEQUENCE [LARGE SCALE MRNA] OF 83-480</scope>
    <source>
        <tissue>Brain</tissue>
        <tissue>Lung</tissue>
    </source>
</reference>
<reference key="3">
    <citation type="submission" date="1997-03" db="EMBL/GenBank/DDBJ databases">
        <title>IRX: a new family of human homeobox genes from the breast.</title>
        <authorList>
            <person name="Lewis M.T."/>
            <person name="Strickland P.A."/>
            <person name="Ross S."/>
            <person name="Snyder C.J."/>
            <person name="Daniel C.W."/>
        </authorList>
    </citation>
    <scope>NUCLEOTIDE SEQUENCE [MRNA] OF 84-176</scope>
</reference>
<sequence>MSFPQLGYPQYLSAAGPGAYGGERPGVLAAAAAAAAAASSGRPGAAELGGGAGAAAVTSVLGMYAAAGPYAGAPNYSAFLPYAADLSLFSQMGSQYELKDNPGVHPATFAAHTAPAYYPYGQFQYGDPGRPKNATRESTSTLKAWLNEHRKNPYPTKGEKIMLAIITKMTLTQVSTWFANARRRLKKENKVTWGARSKDQEDGALFGSDTEGDPEKAEDDEEIDLESIDIDKIDEHDGDQSNEDDEDKAEAPHAPAAPSALARDQGSPLAAADVLKPQDSPLGLAKEAPEPGSTRLLSPGAAAGGLQGAPHGKPKIWSLAETATSPDGAPKASPPPPAGHPGAHGPSAGAPLQHPAFLPSHGLYTCHIGKFSNWTNSAFLAQGSLLNMRSFLGVGAPHAAPHGPHLPAPPPPQPPVAIAPGALNGDKASVRSSPTLPERDLVPRPDSPAQQLKSPFQPVRDNSLAPQEGTPRILAALPSA</sequence>
<accession>P78414</accession>
<accession>Q7Z2F8</accession>
<accession>Q8N312</accession>
<feature type="chain" id="PRO_0000049151" description="Iroquois-class homeodomain protein IRX-1">
    <location>
        <begin position="1"/>
        <end position="480"/>
    </location>
</feature>
<feature type="DNA-binding region" description="Homeobox; TALE-type" evidence="2">
    <location>
        <begin position="125"/>
        <end position="188"/>
    </location>
</feature>
<feature type="region of interest" description="Disordered" evidence="3">
    <location>
        <begin position="190"/>
        <end position="268"/>
    </location>
</feature>
<feature type="region of interest" description="Disordered" evidence="3">
    <location>
        <begin position="280"/>
        <end position="354"/>
    </location>
</feature>
<feature type="region of interest" description="Disordered" evidence="3">
    <location>
        <begin position="401"/>
        <end position="480"/>
    </location>
</feature>
<feature type="compositionally biased region" description="Acidic residues" evidence="3">
    <location>
        <begin position="210"/>
        <end position="228"/>
    </location>
</feature>
<feature type="compositionally biased region" description="Basic and acidic residues" evidence="3">
    <location>
        <begin position="229"/>
        <end position="239"/>
    </location>
</feature>
<feature type="compositionally biased region" description="Low complexity" evidence="3">
    <location>
        <begin position="252"/>
        <end position="262"/>
    </location>
</feature>
<feature type="compositionally biased region" description="Low complexity" evidence="3">
    <location>
        <begin position="340"/>
        <end position="351"/>
    </location>
</feature>
<feature type="compositionally biased region" description="Pro residues" evidence="3">
    <location>
        <begin position="404"/>
        <end position="417"/>
    </location>
</feature>
<feature type="modified residue" description="Phosphoserine" evidence="1">
    <location>
        <position position="241"/>
    </location>
</feature>
<feature type="sequence conflict" description="In Ref. 2; AAB50005." evidence="4" ref="2">
    <original>S</original>
    <variation>N</variation>
    <location>
        <position position="138"/>
    </location>
</feature>
<comment type="subcellular location">
    <subcellularLocation>
        <location evidence="4">Nucleus</location>
    </subcellularLocation>
</comment>
<comment type="similarity">
    <text evidence="4">Belongs to the TALE/IRO homeobox family.</text>
</comment>
<evidence type="ECO:0000250" key="1">
    <source>
        <dbReference type="UniProtKB" id="P81068"/>
    </source>
</evidence>
<evidence type="ECO:0000255" key="2">
    <source>
        <dbReference type="PROSITE-ProRule" id="PRU00108"/>
    </source>
</evidence>
<evidence type="ECO:0000256" key="3">
    <source>
        <dbReference type="SAM" id="MobiDB-lite"/>
    </source>
</evidence>
<evidence type="ECO:0000305" key="4"/>
<name>IRX1_HUMAN</name>
<keyword id="KW-0238">DNA-binding</keyword>
<keyword id="KW-0371">Homeobox</keyword>
<keyword id="KW-0539">Nucleus</keyword>
<keyword id="KW-0597">Phosphoprotein</keyword>
<keyword id="KW-1267">Proteomics identification</keyword>
<keyword id="KW-1185">Reference proteome</keyword>